<organism>
    <name type="scientific">Saccharomyces cerevisiae (strain ATCC 204508 / S288c)</name>
    <name type="common">Baker's yeast</name>
    <dbReference type="NCBI Taxonomy" id="559292"/>
    <lineage>
        <taxon>Eukaryota</taxon>
        <taxon>Fungi</taxon>
        <taxon>Dikarya</taxon>
        <taxon>Ascomycota</taxon>
        <taxon>Saccharomycotina</taxon>
        <taxon>Saccharomycetes</taxon>
        <taxon>Saccharomycetales</taxon>
        <taxon>Saccharomycetaceae</taxon>
        <taxon>Saccharomyces</taxon>
    </lineage>
</organism>
<proteinExistence type="evidence at protein level"/>
<dbReference type="EMBL" id="L04948">
    <property type="protein sequence ID" value="AAA34886.1"/>
    <property type="molecule type" value="Genomic_DNA"/>
</dbReference>
<dbReference type="EMBL" id="AJ238698">
    <property type="protein sequence ID" value="CAB52216.1"/>
    <property type="molecule type" value="Genomic_DNA"/>
</dbReference>
<dbReference type="EMBL" id="S44213">
    <property type="protein sequence ID" value="AAB23071.2"/>
    <property type="molecule type" value="Genomic_DNA"/>
</dbReference>
<dbReference type="EMBL" id="Z28120">
    <property type="protein sequence ID" value="CAA81961.1"/>
    <property type="molecule type" value="Genomic_DNA"/>
</dbReference>
<dbReference type="EMBL" id="BK006944">
    <property type="protein sequence ID" value="DAA09040.1"/>
    <property type="molecule type" value="Genomic_DNA"/>
</dbReference>
<dbReference type="PIR" id="S25357">
    <property type="entry name" value="S25357"/>
</dbReference>
<dbReference type="RefSeq" id="NP_012802.1">
    <property type="nucleotide sequence ID" value="NM_001179686.1"/>
</dbReference>
<dbReference type="SMR" id="P32332"/>
<dbReference type="BioGRID" id="34015">
    <property type="interactions" value="119"/>
</dbReference>
<dbReference type="DIP" id="DIP-5417N"/>
<dbReference type="FunCoup" id="P32332">
    <property type="interactions" value="445"/>
</dbReference>
<dbReference type="IntAct" id="P32332">
    <property type="interactions" value="15"/>
</dbReference>
<dbReference type="MINT" id="P32332"/>
<dbReference type="STRING" id="4932.YKL120W"/>
<dbReference type="TCDB" id="2.A.29.15.1">
    <property type="family name" value="the mitochondrial carrier (mc) family"/>
</dbReference>
<dbReference type="iPTMnet" id="P32332"/>
<dbReference type="PaxDb" id="4932-YKL120W"/>
<dbReference type="PeptideAtlas" id="P32332"/>
<dbReference type="EnsemblFungi" id="YKL120W_mRNA">
    <property type="protein sequence ID" value="YKL120W"/>
    <property type="gene ID" value="YKL120W"/>
</dbReference>
<dbReference type="GeneID" id="853739"/>
<dbReference type="KEGG" id="sce:YKL120W"/>
<dbReference type="AGR" id="SGD:S000001603"/>
<dbReference type="SGD" id="S000001603">
    <property type="gene designation" value="OAC1"/>
</dbReference>
<dbReference type="VEuPathDB" id="FungiDB:YKL120W"/>
<dbReference type="eggNOG" id="KOG0755">
    <property type="taxonomic scope" value="Eukaryota"/>
</dbReference>
<dbReference type="GeneTree" id="ENSGT00940000160771"/>
<dbReference type="HOGENOM" id="CLU_015166_14_3_1"/>
<dbReference type="InParanoid" id="P32332"/>
<dbReference type="OMA" id="GFYDPMR"/>
<dbReference type="OrthoDB" id="6703404at2759"/>
<dbReference type="BioCyc" id="YEAST:G3O-31903-MONOMER"/>
<dbReference type="BioGRID-ORCS" id="853739">
    <property type="hits" value="0 hits in 10 CRISPR screens"/>
</dbReference>
<dbReference type="PRO" id="PR:P32332"/>
<dbReference type="Proteomes" id="UP000002311">
    <property type="component" value="Chromosome XI"/>
</dbReference>
<dbReference type="RNAct" id="P32332">
    <property type="molecule type" value="protein"/>
</dbReference>
<dbReference type="GO" id="GO:0005743">
    <property type="term" value="C:mitochondrial inner membrane"/>
    <property type="evidence" value="ECO:0000314"/>
    <property type="project" value="SGD"/>
</dbReference>
<dbReference type="GO" id="GO:0005739">
    <property type="term" value="C:mitochondrion"/>
    <property type="evidence" value="ECO:0007005"/>
    <property type="project" value="SGD"/>
</dbReference>
<dbReference type="GO" id="GO:0034658">
    <property type="term" value="F:isopropylmalate transmembrane transporter activity"/>
    <property type="evidence" value="ECO:0000314"/>
    <property type="project" value="SGD"/>
</dbReference>
<dbReference type="GO" id="GO:1901239">
    <property type="term" value="F:malonate(1-) transmembrane transporter activity"/>
    <property type="evidence" value="ECO:0000314"/>
    <property type="project" value="SGD"/>
</dbReference>
<dbReference type="GO" id="GO:0015131">
    <property type="term" value="F:oxaloacetate transmembrane transporter activity"/>
    <property type="evidence" value="ECO:0000314"/>
    <property type="project" value="SGD"/>
</dbReference>
<dbReference type="GO" id="GO:0015116">
    <property type="term" value="F:sulfate transmembrane transporter activity"/>
    <property type="evidence" value="ECO:0000314"/>
    <property type="project" value="SGD"/>
</dbReference>
<dbReference type="GO" id="GO:0022857">
    <property type="term" value="F:transmembrane transporter activity"/>
    <property type="evidence" value="ECO:0000318"/>
    <property type="project" value="GO_Central"/>
</dbReference>
<dbReference type="GO" id="GO:0034659">
    <property type="term" value="P:isopropylmalate transport"/>
    <property type="evidence" value="ECO:0000314"/>
    <property type="project" value="SGD"/>
</dbReference>
<dbReference type="GO" id="GO:0015729">
    <property type="term" value="P:oxaloacetate transport"/>
    <property type="evidence" value="ECO:0000314"/>
    <property type="project" value="SGD"/>
</dbReference>
<dbReference type="GO" id="GO:1902358">
    <property type="term" value="P:sulfate transmembrane transport"/>
    <property type="evidence" value="ECO:0000314"/>
    <property type="project" value="SGD"/>
</dbReference>
<dbReference type="FunFam" id="1.50.40.10:FF:000039">
    <property type="entry name" value="Solute carrier family 25 member 35"/>
    <property type="match status" value="1"/>
</dbReference>
<dbReference type="Gene3D" id="1.50.40.10">
    <property type="entry name" value="Mitochondrial carrier domain"/>
    <property type="match status" value="1"/>
</dbReference>
<dbReference type="InterPro" id="IPR002067">
    <property type="entry name" value="Mit_carrier"/>
</dbReference>
<dbReference type="InterPro" id="IPR051508">
    <property type="entry name" value="Mito_Carrier_Antiporter"/>
</dbReference>
<dbReference type="InterPro" id="IPR018108">
    <property type="entry name" value="Mitochondrial_sb/sol_carrier"/>
</dbReference>
<dbReference type="InterPro" id="IPR023395">
    <property type="entry name" value="Mt_carrier_dom_sf"/>
</dbReference>
<dbReference type="PANTHER" id="PTHR45928">
    <property type="entry name" value="RE38146P"/>
    <property type="match status" value="1"/>
</dbReference>
<dbReference type="PANTHER" id="PTHR45928:SF1">
    <property type="entry name" value="RE38146P"/>
    <property type="match status" value="1"/>
</dbReference>
<dbReference type="Pfam" id="PF00153">
    <property type="entry name" value="Mito_carr"/>
    <property type="match status" value="3"/>
</dbReference>
<dbReference type="PRINTS" id="PR00926">
    <property type="entry name" value="MITOCARRIER"/>
</dbReference>
<dbReference type="SUPFAM" id="SSF103506">
    <property type="entry name" value="Mitochondrial carrier"/>
    <property type="match status" value="1"/>
</dbReference>
<dbReference type="PROSITE" id="PS50920">
    <property type="entry name" value="SOLCAR"/>
    <property type="match status" value="3"/>
</dbReference>
<evidence type="ECO:0000255" key="1"/>
<evidence type="ECO:0000269" key="2">
    <source>
    </source>
</evidence>
<evidence type="ECO:0000269" key="3">
    <source>
    </source>
</evidence>
<evidence type="ECO:0000305" key="4"/>
<evidence type="ECO:0000305" key="5">
    <source>
    </source>
</evidence>
<feature type="chain" id="PRO_0000090689" description="Mitochondrial oxaloacetate transport protein">
    <location>
        <begin position="1"/>
        <end position="324"/>
    </location>
</feature>
<feature type="transmembrane region" description="Helical; Name=1" evidence="1">
    <location>
        <begin position="26"/>
        <end position="46"/>
    </location>
</feature>
<feature type="transmembrane region" description="Helical; Name=2" evidence="1">
    <location>
        <begin position="79"/>
        <end position="99"/>
    </location>
</feature>
<feature type="transmembrane region" description="Helical; Name=3" evidence="1">
    <location>
        <begin position="132"/>
        <end position="152"/>
    </location>
</feature>
<feature type="transmembrane region" description="Helical; Name=4" evidence="1">
    <location>
        <begin position="193"/>
        <end position="213"/>
    </location>
</feature>
<feature type="transmembrane region" description="Helical; Name=5" evidence="1">
    <location>
        <begin position="233"/>
        <end position="253"/>
    </location>
</feature>
<feature type="transmembrane region" description="Helical; Name=6" evidence="1">
    <location>
        <begin position="284"/>
        <end position="305"/>
    </location>
</feature>
<feature type="repeat" description="Solcar 1">
    <location>
        <begin position="20"/>
        <end position="111"/>
    </location>
</feature>
<feature type="repeat" description="Solcar 2">
    <location>
        <begin position="126"/>
        <end position="218"/>
    </location>
</feature>
<feature type="repeat" description="Solcar 3">
    <location>
        <begin position="227"/>
        <end position="312"/>
    </location>
</feature>
<accession>P32332</accession>
<accession>D6VXH0</accession>
<reference key="1">
    <citation type="submission" date="1992-10" db="EMBL/GenBank/DDBJ databases">
        <title>Sequence and disruption analysis of a putative mitochondrial transporter protein gene.</title>
        <authorList>
            <person name="Bachhawat A.K."/>
            <person name="Jones E.W."/>
        </authorList>
    </citation>
    <scope>NUCLEOTIDE SEQUENCE [GENOMIC DNA]</scope>
    <source>
        <strain>ATCC 26109 / X2180</strain>
    </source>
</reference>
<reference key="2">
    <citation type="journal article" date="1999" name="J. Biol. Chem.">
        <title>Identification of the yeast mitochondrial transporter for oxaloacetate and sulfate.</title>
        <authorList>
            <person name="Palmieri L."/>
            <person name="Vozza A."/>
            <person name="Agrimi G."/>
            <person name="De Marco V."/>
            <person name="Runswick M.J."/>
            <person name="Palmieri F."/>
            <person name="Walker J.E."/>
        </authorList>
    </citation>
    <scope>NUCLEOTIDE SEQUENCE [GENOMIC DNA]</scope>
    <scope>CHARACTERIZATION</scope>
    <source>
        <strain>ATCC 96099 / S288c / SEY6210</strain>
    </source>
</reference>
<reference key="3">
    <citation type="journal article" date="1992" name="Yeast">
        <title>Sequence of a segment of yeast chromosome XI identifies a new mitochondrial carrier, a new member of the G protein family, and a protein with the PAAKK motif of the H1 histones.</title>
        <authorList>
            <person name="Colleaux L."/>
            <person name="Richard G.-F."/>
            <person name="Thierry A."/>
            <person name="Dujon B."/>
        </authorList>
    </citation>
    <scope>NUCLEOTIDE SEQUENCE [GENOMIC DNA]</scope>
</reference>
<reference key="4">
    <citation type="journal article" date="1994" name="Nature">
        <title>Complete DNA sequence of yeast chromosome XI.</title>
        <authorList>
            <person name="Dujon B."/>
            <person name="Alexandraki D."/>
            <person name="Andre B."/>
            <person name="Ansorge W."/>
            <person name="Baladron V."/>
            <person name="Ballesta J.P.G."/>
            <person name="Banrevi A."/>
            <person name="Bolle P.-A."/>
            <person name="Bolotin-Fukuhara M."/>
            <person name="Bossier P."/>
            <person name="Bou G."/>
            <person name="Boyer J."/>
            <person name="Buitrago M.J."/>
            <person name="Cheret G."/>
            <person name="Colleaux L."/>
            <person name="Daignan-Fornier B."/>
            <person name="del Rey F."/>
            <person name="Dion C."/>
            <person name="Domdey H."/>
            <person name="Duesterhoeft A."/>
            <person name="Duesterhus S."/>
            <person name="Entian K.-D."/>
            <person name="Erfle H."/>
            <person name="Esteban P.F."/>
            <person name="Feldmann H."/>
            <person name="Fernandes L."/>
            <person name="Fobo G.M."/>
            <person name="Fritz C."/>
            <person name="Fukuhara H."/>
            <person name="Gabel C."/>
            <person name="Gaillon L."/>
            <person name="Garcia-Cantalejo J.M."/>
            <person name="Garcia-Ramirez J.J."/>
            <person name="Gent M.E."/>
            <person name="Ghazvini M."/>
            <person name="Goffeau A."/>
            <person name="Gonzalez A."/>
            <person name="Grothues D."/>
            <person name="Guerreiro P."/>
            <person name="Hegemann J.H."/>
            <person name="Hewitt N."/>
            <person name="Hilger F."/>
            <person name="Hollenberg C.P."/>
            <person name="Horaitis O."/>
            <person name="Indge K.J."/>
            <person name="Jacquier A."/>
            <person name="James C.M."/>
            <person name="Jauniaux J.-C."/>
            <person name="Jimenez A."/>
            <person name="Keuchel H."/>
            <person name="Kirchrath L."/>
            <person name="Kleine K."/>
            <person name="Koetter P."/>
            <person name="Legrain P."/>
            <person name="Liebl S."/>
            <person name="Louis E.J."/>
            <person name="Maia e Silva A."/>
            <person name="Marck C."/>
            <person name="Monnier A.-L."/>
            <person name="Moestl D."/>
            <person name="Mueller S."/>
            <person name="Obermaier B."/>
            <person name="Oliver S.G."/>
            <person name="Pallier C."/>
            <person name="Pascolo S."/>
            <person name="Pfeiffer F."/>
            <person name="Philippsen P."/>
            <person name="Planta R.J."/>
            <person name="Pohl F.M."/>
            <person name="Pohl T.M."/>
            <person name="Poehlmann R."/>
            <person name="Portetelle D."/>
            <person name="Purnelle B."/>
            <person name="Puzos V."/>
            <person name="Ramezani Rad M."/>
            <person name="Rasmussen S.W."/>
            <person name="Remacha M.A."/>
            <person name="Revuelta J.L."/>
            <person name="Richard G.-F."/>
            <person name="Rieger M."/>
            <person name="Rodrigues-Pousada C."/>
            <person name="Rose M."/>
            <person name="Rupp T."/>
            <person name="Santos M.A."/>
            <person name="Schwager C."/>
            <person name="Sensen C."/>
            <person name="Skala J."/>
            <person name="Soares H."/>
            <person name="Sor F."/>
            <person name="Stegemann J."/>
            <person name="Tettelin H."/>
            <person name="Thierry A."/>
            <person name="Tzermia M."/>
            <person name="Urrestarazu L.A."/>
            <person name="van Dyck L."/>
            <person name="van Vliet-Reedijk J.C."/>
            <person name="Valens M."/>
            <person name="Vandenbol M."/>
            <person name="Vilela C."/>
            <person name="Vissers S."/>
            <person name="von Wettstein D."/>
            <person name="Voss H."/>
            <person name="Wiemann S."/>
            <person name="Xu G."/>
            <person name="Zimmermann J."/>
            <person name="Haasemann M."/>
            <person name="Becker I."/>
            <person name="Mewes H.-W."/>
        </authorList>
    </citation>
    <scope>NUCLEOTIDE SEQUENCE [LARGE SCALE GENOMIC DNA]</scope>
    <source>
        <strain>ATCC 204508 / S288c</strain>
    </source>
</reference>
<reference key="5">
    <citation type="journal article" date="2014" name="G3 (Bethesda)">
        <title>The reference genome sequence of Saccharomyces cerevisiae: Then and now.</title>
        <authorList>
            <person name="Engel S.R."/>
            <person name="Dietrich F.S."/>
            <person name="Fisk D.G."/>
            <person name="Binkley G."/>
            <person name="Balakrishnan R."/>
            <person name="Costanzo M.C."/>
            <person name="Dwight S.S."/>
            <person name="Hitz B.C."/>
            <person name="Karra K."/>
            <person name="Nash R.S."/>
            <person name="Weng S."/>
            <person name="Wong E.D."/>
            <person name="Lloyd P."/>
            <person name="Skrzypek M.S."/>
            <person name="Miyasato S.R."/>
            <person name="Simison M."/>
            <person name="Cherry J.M."/>
        </authorList>
    </citation>
    <scope>GENOME REANNOTATION</scope>
    <source>
        <strain>ATCC 204508 / S288c</strain>
    </source>
</reference>
<reference key="6">
    <citation type="journal article" date="2003" name="Nature">
        <title>Global analysis of protein expression in yeast.</title>
        <authorList>
            <person name="Ghaemmaghami S."/>
            <person name="Huh W.-K."/>
            <person name="Bower K."/>
            <person name="Howson R.W."/>
            <person name="Belle A."/>
            <person name="Dephoure N."/>
            <person name="O'Shea E.K."/>
            <person name="Weissman J.S."/>
        </authorList>
    </citation>
    <scope>LEVEL OF PROTEIN EXPRESSION [LARGE SCALE ANALYSIS]</scope>
</reference>
<reference key="7">
    <citation type="journal article" date="2008" name="J. Biol. Chem.">
        <title>alpha-Isopropylmalate, a leucine biosynthesis intermediate in yeast, is transported by the mitochondrial oxalacetate carrier.</title>
        <authorList>
            <person name="Marobbio C.M."/>
            <person name="Giannuzzi G."/>
            <person name="Paradies E."/>
            <person name="Pierri C.L."/>
            <person name="Palmieri F."/>
        </authorList>
    </citation>
    <scope>FUNCTION</scope>
    <scope>TRANSPORTER ACTIVITY</scope>
    <scope>ACTIVITY REGULATION</scope>
    <scope>BIOPHYSICOCHEMICAL PROPERTIES</scope>
    <scope>DISRUPTION PHENOTYPE</scope>
</reference>
<protein>
    <recommendedName>
        <fullName>Mitochondrial oxaloacetate transport protein</fullName>
    </recommendedName>
    <alternativeName>
        <fullName>Mitochondrial carrier protein PMT</fullName>
    </alternativeName>
</protein>
<sequence length="324" mass="35153">MSSDNSKQDKQIEKTAAQKISKFGSFVAGGLAACIAVTVTNPIELIKIRMQLQGEMSASAAKVYKNPIQGMAVIFKNEGIKGLQKGLNAAYIYQIGLNGSRLGFYEPIRSSLNQLFFPDQEPHKVQSVGVNVFSGAASGIIGAVIGSPLFLVKTRLQSYSEFIKIGEQTHYTGVWNGLVTIFKTEGVKGLFRGIDAAILRTGAGSSVQLPIYNTAKNILVKNDLMKDGPALHLTASTISGLGVAVVMNPWDVILTRIYNQKGDLYKGPIDCLVKTVRIEGVTALYKGFAAQVFRIAPHTIMCLTFMEQTMKLVYSIESRVLGHN</sequence>
<keyword id="KW-0472">Membrane</keyword>
<keyword id="KW-0496">Mitochondrion</keyword>
<keyword id="KW-0999">Mitochondrion inner membrane</keyword>
<keyword id="KW-1185">Reference proteome</keyword>
<keyword id="KW-0677">Repeat</keyword>
<keyword id="KW-0812">Transmembrane</keyword>
<keyword id="KW-1133">Transmembrane helix</keyword>
<keyword id="KW-0813">Transport</keyword>
<comment type="function">
    <text evidence="3">Antiporter that exchanges dicarboxylates and sulfur oxoanions across the inner membrane of mitochondria. Exports alpha-isopropylmalate from mitochondrial matrix to the cytosol, where it serves as a precursor for leucine biosynthesis.</text>
</comment>
<comment type="catalytic activity">
    <reaction evidence="5">
        <text>a dicarboxylate(in) + sulfate(out) = a dicarboxylate(out) + sulfate(in)</text>
        <dbReference type="Rhea" id="RHEA:76595"/>
        <dbReference type="ChEBI" id="CHEBI:16189"/>
        <dbReference type="ChEBI" id="CHEBI:28965"/>
    </reaction>
</comment>
<comment type="catalytic activity">
    <reaction evidence="3">
        <text>(2S)-2-isopropylmalate(in) + sulfate(out) = (2S)-2-isopropylmalate(out) + sulfate(in)</text>
        <dbReference type="Rhea" id="RHEA:76343"/>
        <dbReference type="ChEBI" id="CHEBI:1178"/>
        <dbReference type="ChEBI" id="CHEBI:16189"/>
    </reaction>
    <physiologicalReaction direction="left-to-right" evidence="5">
        <dbReference type="Rhea" id="RHEA:76344"/>
    </physiologicalReaction>
    <physiologicalReaction direction="right-to-left" evidence="5">
        <dbReference type="Rhea" id="RHEA:76345"/>
    </physiologicalReaction>
</comment>
<comment type="catalytic activity">
    <reaction evidence="3">
        <text>(2R,3S)-3-isopropylmalate(in) + sulfate(out) = (2R,3S)-3-isopropylmalate(out) + sulfate(in)</text>
        <dbReference type="Rhea" id="RHEA:76347"/>
        <dbReference type="ChEBI" id="CHEBI:16189"/>
        <dbReference type="ChEBI" id="CHEBI:35121"/>
    </reaction>
    <physiologicalReaction direction="left-to-right" evidence="5">
        <dbReference type="Rhea" id="RHEA:76348"/>
    </physiologicalReaction>
    <physiologicalReaction direction="right-to-left" evidence="5">
        <dbReference type="Rhea" id="RHEA:76349"/>
    </physiologicalReaction>
</comment>
<comment type="catalytic activity">
    <reaction evidence="3">
        <text>malonate(in) + sulfate(out) = malonate(out) + sulfate(in)</text>
        <dbReference type="Rhea" id="RHEA:73195"/>
        <dbReference type="ChEBI" id="CHEBI:15792"/>
        <dbReference type="ChEBI" id="CHEBI:16189"/>
    </reaction>
    <physiologicalReaction direction="left-to-right" evidence="5">
        <dbReference type="Rhea" id="RHEA:73196"/>
    </physiologicalReaction>
    <physiologicalReaction direction="right-to-left" evidence="5">
        <dbReference type="Rhea" id="RHEA:73197"/>
    </physiologicalReaction>
</comment>
<comment type="catalytic activity">
    <reaction evidence="3">
        <text>oxaloacetate(in) + sulfate(out) = oxaloacetate(out) + sulfate(in)</text>
        <dbReference type="Rhea" id="RHEA:76351"/>
        <dbReference type="ChEBI" id="CHEBI:16189"/>
        <dbReference type="ChEBI" id="CHEBI:16452"/>
    </reaction>
    <physiologicalReaction direction="left-to-right" evidence="5">
        <dbReference type="Rhea" id="RHEA:76352"/>
    </physiologicalReaction>
    <physiologicalReaction direction="right-to-left" evidence="5">
        <dbReference type="Rhea" id="RHEA:76353"/>
    </physiologicalReaction>
</comment>
<comment type="catalytic activity">
    <reaction evidence="3">
        <text>thiosulfate(in) + sulfate(out) = thiosulfate(out) + sulfate(in)</text>
        <dbReference type="Rhea" id="RHEA:73215"/>
        <dbReference type="ChEBI" id="CHEBI:16189"/>
        <dbReference type="ChEBI" id="CHEBI:33542"/>
    </reaction>
    <physiologicalReaction direction="left-to-right" evidence="5">
        <dbReference type="Rhea" id="RHEA:73216"/>
    </physiologicalReaction>
    <physiologicalReaction direction="right-to-left" evidence="5">
        <dbReference type="Rhea" id="RHEA:73217"/>
    </physiologicalReaction>
</comment>
<comment type="activity regulation">
    <text evidence="3">Inhibited by alpha-keto isocaproate, an intermediate of leucine biosynthesis pathway.</text>
</comment>
<comment type="biophysicochemical properties">
    <kinetics>
        <KM evidence="3">75 uM for (2S)-2-isopropylmalate</KM>
        <KM evidence="3">0.31 mM for (2R,3S)-3-isopropylmalate</KM>
        <KM evidence="3">0.27 mM for oxaloacetate</KM>
        <KM evidence="3">0.56 mM for sulfate</KM>
        <Vmax evidence="3">7.0 mmol/min/g enzyme for (2S)-2-isopropylmalate:sulfate exchange (at 25 degrees Celsius)</Vmax>
    </kinetics>
</comment>
<comment type="subcellular location">
    <subcellularLocation>
        <location evidence="4">Mitochondrion inner membrane</location>
        <topology evidence="4">Multi-pass membrane protein</topology>
    </subcellularLocation>
</comment>
<comment type="disruption phenotype">
    <text evidence="3">Auxotrophy due to deficient leucine biosynthesis.</text>
</comment>
<comment type="miscellaneous">
    <text evidence="2">Present with 5350 molecules/cell in log phase SD medium.</text>
</comment>
<comment type="similarity">
    <text evidence="4">Belongs to the mitochondrial carrier (TC 2.A.29) family.</text>
</comment>
<name>OAC1_YEAST</name>
<gene>
    <name type="primary">OAC1</name>
    <name type="synonym">PMT</name>
    <name type="synonym">PMT1</name>
    <name type="ordered locus">YKL120W</name>
    <name type="ORF">YKL522</name>
</gene>